<comment type="function">
    <text evidence="1">Required for the assembly and/or stability of the 40S ribosomal subunit. Required for the processing of the 20S rRNA-precursor to mature 18S rRNA in a late step of the maturation of 40S ribosomal subunits.</text>
</comment>
<comment type="subunit">
    <text evidence="1">Component of the small ribosomal subunit. Mature ribosomes consist of a small (40S) and a large (60S) subunit. The 40S subunit contains about 33 different proteins and 1 molecule of RNA (18S). The 60S subunit contains about 49 different proteins and 3 molecules of RNA (25S, 5.8S and 5S). Interacts with RPS21.</text>
</comment>
<comment type="subcellular location">
    <subcellularLocation>
        <location evidence="1">Cytoplasm</location>
    </subcellularLocation>
</comment>
<comment type="similarity">
    <text evidence="1">Belongs to the universal ribosomal protein uS2 family.</text>
</comment>
<proteinExistence type="inferred from homology"/>
<reference key="1">
    <citation type="journal article" date="2009" name="Genome Res.">
        <title>Comparative genomics of protoploid Saccharomycetaceae.</title>
        <authorList>
            <consortium name="The Genolevures Consortium"/>
            <person name="Souciet J.-L."/>
            <person name="Dujon B."/>
            <person name="Gaillardin C."/>
            <person name="Johnston M."/>
            <person name="Baret P.V."/>
            <person name="Cliften P."/>
            <person name="Sherman D.J."/>
            <person name="Weissenbach J."/>
            <person name="Westhof E."/>
            <person name="Wincker P."/>
            <person name="Jubin C."/>
            <person name="Poulain J."/>
            <person name="Barbe V."/>
            <person name="Segurens B."/>
            <person name="Artiguenave F."/>
            <person name="Anthouard V."/>
            <person name="Vacherie B."/>
            <person name="Val M.-E."/>
            <person name="Fulton R.S."/>
            <person name="Minx P."/>
            <person name="Wilson R."/>
            <person name="Durrens P."/>
            <person name="Jean G."/>
            <person name="Marck C."/>
            <person name="Martin T."/>
            <person name="Nikolski M."/>
            <person name="Rolland T."/>
            <person name="Seret M.-L."/>
            <person name="Casaregola S."/>
            <person name="Despons L."/>
            <person name="Fairhead C."/>
            <person name="Fischer G."/>
            <person name="Lafontaine I."/>
            <person name="Leh V."/>
            <person name="Lemaire M."/>
            <person name="de Montigny J."/>
            <person name="Neuveglise C."/>
            <person name="Thierry A."/>
            <person name="Blanc-Lenfle I."/>
            <person name="Bleykasten C."/>
            <person name="Diffels J."/>
            <person name="Fritsch E."/>
            <person name="Frangeul L."/>
            <person name="Goeffon A."/>
            <person name="Jauniaux N."/>
            <person name="Kachouri-Lafond R."/>
            <person name="Payen C."/>
            <person name="Potier S."/>
            <person name="Pribylova L."/>
            <person name="Ozanne C."/>
            <person name="Richard G.-F."/>
            <person name="Sacerdot C."/>
            <person name="Straub M.-L."/>
            <person name="Talla E."/>
        </authorList>
    </citation>
    <scope>NUCLEOTIDE SEQUENCE [LARGE SCALE GENOMIC DNA]</scope>
    <source>
        <strain>ATCC 56472 / CBS 6340 / NRRL Y-8284</strain>
    </source>
</reference>
<feature type="initiator methionine" description="Removed" evidence="1">
    <location>
        <position position="1"/>
    </location>
</feature>
<feature type="chain" id="PRO_0000389277" description="Small ribosomal subunit protein uS2">
    <location>
        <begin position="2"/>
        <end position="251"/>
    </location>
</feature>
<feature type="region of interest" description="Disordered" evidence="2">
    <location>
        <begin position="213"/>
        <end position="251"/>
    </location>
</feature>
<feature type="compositionally biased region" description="Acidic residues" evidence="2">
    <location>
        <begin position="222"/>
        <end position="236"/>
    </location>
</feature>
<feature type="modified residue" description="N-acetylserine" evidence="1">
    <location>
        <position position="2"/>
    </location>
</feature>
<gene>
    <name evidence="1" type="primary">RPS0</name>
    <name type="ordered locus">KLTH0C02112g</name>
</gene>
<dbReference type="EMBL" id="CU928167">
    <property type="protein sequence ID" value="CAR21882.1"/>
    <property type="molecule type" value="Genomic_DNA"/>
</dbReference>
<dbReference type="RefSeq" id="XP_002552320.1">
    <property type="nucleotide sequence ID" value="XM_002552274.1"/>
</dbReference>
<dbReference type="SMR" id="C5DDM1"/>
<dbReference type="FunCoup" id="C5DDM1">
    <property type="interactions" value="1456"/>
</dbReference>
<dbReference type="STRING" id="559295.C5DDM1"/>
<dbReference type="GeneID" id="8291179"/>
<dbReference type="KEGG" id="lth:KLTH0C02112g"/>
<dbReference type="eggNOG" id="KOG0830">
    <property type="taxonomic scope" value="Eukaryota"/>
</dbReference>
<dbReference type="HOGENOM" id="CLU_058171_2_0_1"/>
<dbReference type="InParanoid" id="C5DDM1"/>
<dbReference type="OMA" id="VKNFFEP"/>
<dbReference type="OrthoDB" id="414863at2759"/>
<dbReference type="Proteomes" id="UP000002036">
    <property type="component" value="Chromosome C"/>
</dbReference>
<dbReference type="GO" id="GO:0022627">
    <property type="term" value="C:cytosolic small ribosomal subunit"/>
    <property type="evidence" value="ECO:0007669"/>
    <property type="project" value="UniProtKB-UniRule"/>
</dbReference>
<dbReference type="GO" id="GO:0003735">
    <property type="term" value="F:structural constituent of ribosome"/>
    <property type="evidence" value="ECO:0007669"/>
    <property type="project" value="UniProtKB-UniRule"/>
</dbReference>
<dbReference type="GO" id="GO:0000028">
    <property type="term" value="P:ribosomal small subunit assembly"/>
    <property type="evidence" value="ECO:0007669"/>
    <property type="project" value="UniProtKB-UniRule"/>
</dbReference>
<dbReference type="GO" id="GO:0006412">
    <property type="term" value="P:translation"/>
    <property type="evidence" value="ECO:0007669"/>
    <property type="project" value="UniProtKB-UniRule"/>
</dbReference>
<dbReference type="CDD" id="cd01425">
    <property type="entry name" value="RPS2"/>
    <property type="match status" value="1"/>
</dbReference>
<dbReference type="FunFam" id="3.40.50.10490:FF:000010">
    <property type="entry name" value="40S ribosomal protein S0"/>
    <property type="match status" value="1"/>
</dbReference>
<dbReference type="Gene3D" id="3.40.50.10490">
    <property type="entry name" value="Glucose-6-phosphate isomerase like protein, domain 1"/>
    <property type="match status" value="1"/>
</dbReference>
<dbReference type="HAMAP" id="MF_03015">
    <property type="entry name" value="Ribosomal_S2_euk"/>
    <property type="match status" value="1"/>
</dbReference>
<dbReference type="InterPro" id="IPR001865">
    <property type="entry name" value="Ribosomal_uS2"/>
</dbReference>
<dbReference type="InterPro" id="IPR018130">
    <property type="entry name" value="Ribosomal_uS2_CS"/>
</dbReference>
<dbReference type="InterPro" id="IPR027498">
    <property type="entry name" value="Ribosomal_uS2_euk"/>
</dbReference>
<dbReference type="InterPro" id="IPR005707">
    <property type="entry name" value="Ribosomal_uS2_euk/arc"/>
</dbReference>
<dbReference type="InterPro" id="IPR023591">
    <property type="entry name" value="Ribosomal_uS2_flav_dom_sf"/>
</dbReference>
<dbReference type="NCBIfam" id="TIGR01012">
    <property type="entry name" value="uS2_euk_arch"/>
    <property type="match status" value="1"/>
</dbReference>
<dbReference type="PANTHER" id="PTHR11489">
    <property type="entry name" value="40S RIBOSOMAL PROTEIN SA"/>
    <property type="match status" value="1"/>
</dbReference>
<dbReference type="Pfam" id="PF00318">
    <property type="entry name" value="Ribosomal_S2"/>
    <property type="match status" value="2"/>
</dbReference>
<dbReference type="PRINTS" id="PR00395">
    <property type="entry name" value="RIBOSOMALS2"/>
</dbReference>
<dbReference type="SUPFAM" id="SSF52313">
    <property type="entry name" value="Ribosomal protein S2"/>
    <property type="match status" value="1"/>
</dbReference>
<dbReference type="PROSITE" id="PS00962">
    <property type="entry name" value="RIBOSOMAL_S2_1"/>
    <property type="match status" value="1"/>
</dbReference>
<dbReference type="PROSITE" id="PS00963">
    <property type="entry name" value="RIBOSOMAL_S2_2"/>
    <property type="match status" value="1"/>
</dbReference>
<protein>
    <recommendedName>
        <fullName evidence="1">Small ribosomal subunit protein uS2</fullName>
    </recommendedName>
    <alternativeName>
        <fullName evidence="3">40S ribosomal protein S0</fullName>
    </alternativeName>
</protein>
<keyword id="KW-0007">Acetylation</keyword>
<keyword id="KW-0963">Cytoplasm</keyword>
<keyword id="KW-1185">Reference proteome</keyword>
<keyword id="KW-0687">Ribonucleoprotein</keyword>
<keyword id="KW-0689">Ribosomal protein</keyword>
<evidence type="ECO:0000255" key="1">
    <source>
        <dbReference type="HAMAP-Rule" id="MF_03015"/>
    </source>
</evidence>
<evidence type="ECO:0000256" key="2">
    <source>
        <dbReference type="SAM" id="MobiDB-lite"/>
    </source>
</evidence>
<evidence type="ECO:0000305" key="3"/>
<sequence>MSLPATFDLTPEDAQLLLAANVHLGSKNVQVHQEPYVFKTRPDGVNVVNVGKTWEKIVLAARIIAAIPNPEDVVAISSRTYGQRAVLKFSAHTGATAIAGRFTPGSFTNYITRSFKEPRLVIVTDPRSDAQAIKESSYVNIPVIALTDLDSPSEYVDVAIPCNNKGKHSIGLIWYLLAREVLRLRGSLVDRTQPWSIMPDLYFYRDPEEVDQQVAEEATAAADEDVKEEVAEEQTEAADWAEGNTEEVASW</sequence>
<name>RSSA_LACTC</name>
<accession>C5DDM1</accession>
<organism>
    <name type="scientific">Lachancea thermotolerans (strain ATCC 56472 / CBS 6340 / NRRL Y-8284)</name>
    <name type="common">Yeast</name>
    <name type="synonym">Kluyveromyces thermotolerans</name>
    <dbReference type="NCBI Taxonomy" id="559295"/>
    <lineage>
        <taxon>Eukaryota</taxon>
        <taxon>Fungi</taxon>
        <taxon>Dikarya</taxon>
        <taxon>Ascomycota</taxon>
        <taxon>Saccharomycotina</taxon>
        <taxon>Saccharomycetes</taxon>
        <taxon>Saccharomycetales</taxon>
        <taxon>Saccharomycetaceae</taxon>
        <taxon>Lachancea</taxon>
    </lineage>
</organism>